<keyword id="KW-0866">Nonsense-mediated mRNA decay</keyword>
<keyword id="KW-1185">Reference proteome</keyword>
<proteinExistence type="evidence at transcript level"/>
<organism>
    <name type="scientific">Drosophila melanogaster</name>
    <name type="common">Fruit fly</name>
    <dbReference type="NCBI Taxonomy" id="7227"/>
    <lineage>
        <taxon>Eukaryota</taxon>
        <taxon>Metazoa</taxon>
        <taxon>Ecdysozoa</taxon>
        <taxon>Arthropoda</taxon>
        <taxon>Hexapoda</taxon>
        <taxon>Insecta</taxon>
        <taxon>Pterygota</taxon>
        <taxon>Neoptera</taxon>
        <taxon>Endopterygota</taxon>
        <taxon>Diptera</taxon>
        <taxon>Brachycera</taxon>
        <taxon>Muscomorpha</taxon>
        <taxon>Ephydroidea</taxon>
        <taxon>Drosophilidae</taxon>
        <taxon>Drosophila</taxon>
        <taxon>Sophophora</taxon>
    </lineage>
</organism>
<dbReference type="EMBL" id="AE014298">
    <property type="protein sequence ID" value="AAS65248.1"/>
    <property type="molecule type" value="Genomic_DNA"/>
</dbReference>
<dbReference type="EMBL" id="AL009191">
    <property type="protein sequence ID" value="CAA15683.1"/>
    <property type="molecule type" value="Genomic_DNA"/>
</dbReference>
<dbReference type="EMBL" id="AY051600">
    <property type="protein sequence ID" value="AAK93024.1"/>
    <property type="molecule type" value="mRNA"/>
</dbReference>
<dbReference type="EMBL" id="BK002973">
    <property type="protein sequence ID" value="DAA03173.1"/>
    <property type="molecule type" value="Genomic_DNA"/>
</dbReference>
<dbReference type="RefSeq" id="NP_996330.1">
    <property type="nucleotide sequence ID" value="NM_206607.2"/>
</dbReference>
<dbReference type="SMR" id="O46080"/>
<dbReference type="BioGRID" id="77757">
    <property type="interactions" value="1"/>
</dbReference>
<dbReference type="FunCoup" id="O46080">
    <property type="interactions" value="573"/>
</dbReference>
<dbReference type="STRING" id="7227.FBpp0070335"/>
<dbReference type="PaxDb" id="7227-FBpp0070335"/>
<dbReference type="DNASU" id="2768908"/>
<dbReference type="EnsemblMetazoa" id="FBtr0070349">
    <property type="protein sequence ID" value="FBpp0070335"/>
    <property type="gene ID" value="FBgn0023520"/>
</dbReference>
<dbReference type="GeneID" id="2768908"/>
<dbReference type="KEGG" id="dme:Dmel_CG3857"/>
<dbReference type="UCSC" id="CG3857-RA">
    <property type="organism name" value="d. melanogaster"/>
</dbReference>
<dbReference type="AGR" id="FB:FBgn0023520"/>
<dbReference type="FlyBase" id="FBgn0023520">
    <property type="gene designation" value="CG3857"/>
</dbReference>
<dbReference type="VEuPathDB" id="VectorBase:FBgn0023520"/>
<dbReference type="eggNOG" id="KOG4181">
    <property type="taxonomic scope" value="Eukaryota"/>
</dbReference>
<dbReference type="GeneTree" id="ENSGT00390000003568"/>
<dbReference type="HOGENOM" id="CLU_556992_0_0_1"/>
<dbReference type="InParanoid" id="O46080"/>
<dbReference type="OMA" id="PCKGYVR"/>
<dbReference type="OrthoDB" id="79514at2759"/>
<dbReference type="PhylomeDB" id="O46080"/>
<dbReference type="Reactome" id="R-DME-975957">
    <property type="pathway name" value="Nonsense Mediated Decay (NMD) enhanced by the Exon Junction Complex (EJC)"/>
</dbReference>
<dbReference type="BioGRID-ORCS" id="2768908">
    <property type="hits" value="0 hits in 1 CRISPR screen"/>
</dbReference>
<dbReference type="GenomeRNAi" id="2768908"/>
<dbReference type="PRO" id="PR:O46080"/>
<dbReference type="Proteomes" id="UP000000803">
    <property type="component" value="Chromosome X"/>
</dbReference>
<dbReference type="Bgee" id="FBgn0023520">
    <property type="expression patterns" value="Expressed in T neuron T5b (Drosophila) in embryonic/larval optic lobe (Drosophila) and 37 other cell types or tissues"/>
</dbReference>
<dbReference type="GO" id="GO:0042332">
    <property type="term" value="P:gravitaxis"/>
    <property type="evidence" value="ECO:0000315"/>
    <property type="project" value="FlyBase"/>
</dbReference>
<dbReference type="GO" id="GO:0000184">
    <property type="term" value="P:nuclear-transcribed mRNA catabolic process, nonsense-mediated decay"/>
    <property type="evidence" value="ECO:0000250"/>
    <property type="project" value="UniProtKB"/>
</dbReference>
<dbReference type="FunFam" id="3.40.50.300:FF:003585">
    <property type="entry name" value="GD16400"/>
    <property type="match status" value="1"/>
</dbReference>
<dbReference type="Gene3D" id="3.40.50.300">
    <property type="entry name" value="P-loop containing nucleotide triphosphate hydrolases"/>
    <property type="match status" value="1"/>
</dbReference>
<dbReference type="InterPro" id="IPR027417">
    <property type="entry name" value="P-loop_NTPase"/>
</dbReference>
<dbReference type="InterPro" id="IPR039177">
    <property type="entry name" value="SMG9"/>
</dbReference>
<dbReference type="PANTHER" id="PTHR14270">
    <property type="entry name" value="NONSENSE-MEDIATED MRNA DECAY FACTOR SMG9"/>
    <property type="match status" value="1"/>
</dbReference>
<dbReference type="PANTHER" id="PTHR14270:SF0">
    <property type="entry name" value="NONSENSE-MEDIATED MRNA DECAY FACTOR SMG9"/>
    <property type="match status" value="1"/>
</dbReference>
<dbReference type="SUPFAM" id="SSF52540">
    <property type="entry name" value="P-loop containing nucleoside triphosphate hydrolases"/>
    <property type="match status" value="1"/>
</dbReference>
<protein>
    <recommendedName>
        <fullName>Protein SMG9</fullName>
    </recommendedName>
    <alternativeName>
        <fullName>Protein smg-9 homolog</fullName>
    </alternativeName>
</protein>
<evidence type="ECO:0000250" key="1"/>
<evidence type="ECO:0000256" key="2">
    <source>
        <dbReference type="SAM" id="MobiDB-lite"/>
    </source>
</evidence>
<evidence type="ECO:0000305" key="3"/>
<feature type="chain" id="PRO_0000378187" description="Protein SMG9">
    <location>
        <begin position="1"/>
        <end position="487"/>
    </location>
</feature>
<feature type="region of interest" description="Disordered" evidence="2">
    <location>
        <begin position="30"/>
        <end position="83"/>
    </location>
</feature>
<feature type="region of interest" description="Disordered" evidence="2">
    <location>
        <begin position="136"/>
        <end position="164"/>
    </location>
</feature>
<feature type="compositionally biased region" description="Basic and acidic residues" evidence="2">
    <location>
        <begin position="42"/>
        <end position="70"/>
    </location>
</feature>
<sequence length="487" mass="54727">MADPRRRFRNKKRDEACSGLLAPVTIARREDAARMMQPKILLKKDRDREQETWDRERDKDRKLERDREAEPSPSCYPDTPPALKTMIVNRTGEVRPADRCQMPLAGGALVQGSGQLSAVPSSSVCAALVSSVPTSRDKGSCSGGAGTAGTSAGAPNALQELQPPRMNRPTPLIVANGIFNANARKLFHKTNTDFTVIGVLGGQSSGKSTLLNLLAAERSLDYDYYQHLFSPEADECIFATRHKLKPNNGQKSILRPRTETLQFFITRERHILLDTPPLMPVGKDSDHQDLYSLGTMAQLLSVCHILILVIDGLALEQLRLINAALRLRPTLHCKGYVRDHMPQVVFVRARAHRIDFEIQQRERLDKKLAYLYGPTGLPIYRGRGDARCLNTFLLPEVSSNKATAFHSCLGELVRQFRERILGCTRISMCHTSTELSEAIWFEILAESARKAAPHFEKIYAEIKLRHLDTRCQWRSDNWRTFSSNAES</sequence>
<gene>
    <name type="ORF">CG3857</name>
</gene>
<comment type="function">
    <text evidence="1">Involved in nonsense-mediated decay (NMD) of mRNAs containing premature stop codons. Probable component of kinase complex containing nonC and recruited to stalled ribosomes (By similarity).</text>
</comment>
<comment type="similarity">
    <text evidence="3">Belongs to the SMG9 family.</text>
</comment>
<reference key="1">
    <citation type="journal article" date="2000" name="Science">
        <title>The genome sequence of Drosophila melanogaster.</title>
        <authorList>
            <person name="Adams M.D."/>
            <person name="Celniker S.E."/>
            <person name="Holt R.A."/>
            <person name="Evans C.A."/>
            <person name="Gocayne J.D."/>
            <person name="Amanatides P.G."/>
            <person name="Scherer S.E."/>
            <person name="Li P.W."/>
            <person name="Hoskins R.A."/>
            <person name="Galle R.F."/>
            <person name="George R.A."/>
            <person name="Lewis S.E."/>
            <person name="Richards S."/>
            <person name="Ashburner M."/>
            <person name="Henderson S.N."/>
            <person name="Sutton G.G."/>
            <person name="Wortman J.R."/>
            <person name="Yandell M.D."/>
            <person name="Zhang Q."/>
            <person name="Chen L.X."/>
            <person name="Brandon R.C."/>
            <person name="Rogers Y.-H.C."/>
            <person name="Blazej R.G."/>
            <person name="Champe M."/>
            <person name="Pfeiffer B.D."/>
            <person name="Wan K.H."/>
            <person name="Doyle C."/>
            <person name="Baxter E.G."/>
            <person name="Helt G."/>
            <person name="Nelson C.R."/>
            <person name="Miklos G.L.G."/>
            <person name="Abril J.F."/>
            <person name="Agbayani A."/>
            <person name="An H.-J."/>
            <person name="Andrews-Pfannkoch C."/>
            <person name="Baldwin D."/>
            <person name="Ballew R.M."/>
            <person name="Basu A."/>
            <person name="Baxendale J."/>
            <person name="Bayraktaroglu L."/>
            <person name="Beasley E.M."/>
            <person name="Beeson K.Y."/>
            <person name="Benos P.V."/>
            <person name="Berman B.P."/>
            <person name="Bhandari D."/>
            <person name="Bolshakov S."/>
            <person name="Borkova D."/>
            <person name="Botchan M.R."/>
            <person name="Bouck J."/>
            <person name="Brokstein P."/>
            <person name="Brottier P."/>
            <person name="Burtis K.C."/>
            <person name="Busam D.A."/>
            <person name="Butler H."/>
            <person name="Cadieu E."/>
            <person name="Center A."/>
            <person name="Chandra I."/>
            <person name="Cherry J.M."/>
            <person name="Cawley S."/>
            <person name="Dahlke C."/>
            <person name="Davenport L.B."/>
            <person name="Davies P."/>
            <person name="de Pablos B."/>
            <person name="Delcher A."/>
            <person name="Deng Z."/>
            <person name="Mays A.D."/>
            <person name="Dew I."/>
            <person name="Dietz S.M."/>
            <person name="Dodson K."/>
            <person name="Doup L.E."/>
            <person name="Downes M."/>
            <person name="Dugan-Rocha S."/>
            <person name="Dunkov B.C."/>
            <person name="Dunn P."/>
            <person name="Durbin K.J."/>
            <person name="Evangelista C.C."/>
            <person name="Ferraz C."/>
            <person name="Ferriera S."/>
            <person name="Fleischmann W."/>
            <person name="Fosler C."/>
            <person name="Gabrielian A.E."/>
            <person name="Garg N.S."/>
            <person name="Gelbart W.M."/>
            <person name="Glasser K."/>
            <person name="Glodek A."/>
            <person name="Gong F."/>
            <person name="Gorrell J.H."/>
            <person name="Gu Z."/>
            <person name="Guan P."/>
            <person name="Harris M."/>
            <person name="Harris N.L."/>
            <person name="Harvey D.A."/>
            <person name="Heiman T.J."/>
            <person name="Hernandez J.R."/>
            <person name="Houck J."/>
            <person name="Hostin D."/>
            <person name="Houston K.A."/>
            <person name="Howland T.J."/>
            <person name="Wei M.-H."/>
            <person name="Ibegwam C."/>
            <person name="Jalali M."/>
            <person name="Kalush F."/>
            <person name="Karpen G.H."/>
            <person name="Ke Z."/>
            <person name="Kennison J.A."/>
            <person name="Ketchum K.A."/>
            <person name="Kimmel B.E."/>
            <person name="Kodira C.D."/>
            <person name="Kraft C.L."/>
            <person name="Kravitz S."/>
            <person name="Kulp D."/>
            <person name="Lai Z."/>
            <person name="Lasko P."/>
            <person name="Lei Y."/>
            <person name="Levitsky A.A."/>
            <person name="Li J.H."/>
            <person name="Li Z."/>
            <person name="Liang Y."/>
            <person name="Lin X."/>
            <person name="Liu X."/>
            <person name="Mattei B."/>
            <person name="McIntosh T.C."/>
            <person name="McLeod M.P."/>
            <person name="McPherson D."/>
            <person name="Merkulov G."/>
            <person name="Milshina N.V."/>
            <person name="Mobarry C."/>
            <person name="Morris J."/>
            <person name="Moshrefi A."/>
            <person name="Mount S.M."/>
            <person name="Moy M."/>
            <person name="Murphy B."/>
            <person name="Murphy L."/>
            <person name="Muzny D.M."/>
            <person name="Nelson D.L."/>
            <person name="Nelson D.R."/>
            <person name="Nelson K.A."/>
            <person name="Nixon K."/>
            <person name="Nusskern D.R."/>
            <person name="Pacleb J.M."/>
            <person name="Palazzolo M."/>
            <person name="Pittman G.S."/>
            <person name="Pan S."/>
            <person name="Pollard J."/>
            <person name="Puri V."/>
            <person name="Reese M.G."/>
            <person name="Reinert K."/>
            <person name="Remington K."/>
            <person name="Saunders R.D.C."/>
            <person name="Scheeler F."/>
            <person name="Shen H."/>
            <person name="Shue B.C."/>
            <person name="Siden-Kiamos I."/>
            <person name="Simpson M."/>
            <person name="Skupski M.P."/>
            <person name="Smith T.J."/>
            <person name="Spier E."/>
            <person name="Spradling A.C."/>
            <person name="Stapleton M."/>
            <person name="Strong R."/>
            <person name="Sun E."/>
            <person name="Svirskas R."/>
            <person name="Tector C."/>
            <person name="Turner R."/>
            <person name="Venter E."/>
            <person name="Wang A.H."/>
            <person name="Wang X."/>
            <person name="Wang Z.-Y."/>
            <person name="Wassarman D.A."/>
            <person name="Weinstock G.M."/>
            <person name="Weissenbach J."/>
            <person name="Williams S.M."/>
            <person name="Woodage T."/>
            <person name="Worley K.C."/>
            <person name="Wu D."/>
            <person name="Yang S."/>
            <person name="Yao Q.A."/>
            <person name="Ye J."/>
            <person name="Yeh R.-F."/>
            <person name="Zaveri J.S."/>
            <person name="Zhan M."/>
            <person name="Zhang G."/>
            <person name="Zhao Q."/>
            <person name="Zheng L."/>
            <person name="Zheng X.H."/>
            <person name="Zhong F.N."/>
            <person name="Zhong W."/>
            <person name="Zhou X."/>
            <person name="Zhu S.C."/>
            <person name="Zhu X."/>
            <person name="Smith H.O."/>
            <person name="Gibbs R.A."/>
            <person name="Myers E.W."/>
            <person name="Rubin G.M."/>
            <person name="Venter J.C."/>
        </authorList>
    </citation>
    <scope>NUCLEOTIDE SEQUENCE [LARGE SCALE GENOMIC DNA]</scope>
    <source>
        <strain>Berkeley</strain>
    </source>
</reference>
<reference key="2">
    <citation type="journal article" date="2002" name="Genome Biol.">
        <title>Annotation of the Drosophila melanogaster euchromatic genome: a systematic review.</title>
        <authorList>
            <person name="Misra S."/>
            <person name="Crosby M.A."/>
            <person name="Mungall C.J."/>
            <person name="Matthews B.B."/>
            <person name="Campbell K.S."/>
            <person name="Hradecky P."/>
            <person name="Huang Y."/>
            <person name="Kaminker J.S."/>
            <person name="Millburn G.H."/>
            <person name="Prochnik S.E."/>
            <person name="Smith C.D."/>
            <person name="Tupy J.L."/>
            <person name="Whitfield E.J."/>
            <person name="Bayraktaroglu L."/>
            <person name="Berman B.P."/>
            <person name="Bettencourt B.R."/>
            <person name="Celniker S.E."/>
            <person name="de Grey A.D.N.J."/>
            <person name="Drysdale R.A."/>
            <person name="Harris N.L."/>
            <person name="Richter J."/>
            <person name="Russo S."/>
            <person name="Schroeder A.J."/>
            <person name="Shu S.Q."/>
            <person name="Stapleton M."/>
            <person name="Yamada C."/>
            <person name="Ashburner M."/>
            <person name="Gelbart W.M."/>
            <person name="Rubin G.M."/>
            <person name="Lewis S.E."/>
        </authorList>
    </citation>
    <scope>GENOME REANNOTATION</scope>
    <source>
        <strain>Berkeley</strain>
    </source>
</reference>
<reference key="3">
    <citation type="journal article" date="2000" name="Science">
        <title>From sequence to chromosome: the tip of the X chromosome of D. melanogaster.</title>
        <authorList>
            <person name="Benos P.V."/>
            <person name="Gatt M.K."/>
            <person name="Ashburner M."/>
            <person name="Murphy L."/>
            <person name="Harris D."/>
            <person name="Barrell B.G."/>
            <person name="Ferraz C."/>
            <person name="Vidal S."/>
            <person name="Brun C."/>
            <person name="Demailles J."/>
            <person name="Cadieu E."/>
            <person name="Dreano S."/>
            <person name="Gloux S."/>
            <person name="Lelaure V."/>
            <person name="Mottier S."/>
            <person name="Galibert F."/>
            <person name="Borkova D."/>
            <person name="Minana B."/>
            <person name="Kafatos F.C."/>
            <person name="Louis C."/>
            <person name="Siden-Kiamos I."/>
            <person name="Bolshakov S."/>
            <person name="Papagiannakis G."/>
            <person name="Spanos L."/>
            <person name="Cox S."/>
            <person name="Madueno E."/>
            <person name="de Pablos B."/>
            <person name="Modolell J."/>
            <person name="Peter A."/>
            <person name="Schoettler P."/>
            <person name="Werner M."/>
            <person name="Mourkioti F."/>
            <person name="Beinert N."/>
            <person name="Dowe G."/>
            <person name="Schaefer U."/>
            <person name="Jaeckle H."/>
            <person name="Bucheton A."/>
            <person name="Callister D.M."/>
            <person name="Campbell L.A."/>
            <person name="Darlamitsou A."/>
            <person name="Henderson N.S."/>
            <person name="McMillan P.J."/>
            <person name="Salles C."/>
            <person name="Tait E.A."/>
            <person name="Valenti P."/>
            <person name="Saunders R.D.C."/>
            <person name="Glover D.M."/>
        </authorList>
    </citation>
    <scope>NUCLEOTIDE SEQUENCE [LARGE SCALE GENOMIC DNA]</scope>
    <source>
        <strain>Oregon-R</strain>
    </source>
</reference>
<reference key="4">
    <citation type="journal article" date="2002" name="Genome Biol.">
        <title>A Drosophila full-length cDNA resource.</title>
        <authorList>
            <person name="Stapleton M."/>
            <person name="Carlson J.W."/>
            <person name="Brokstein P."/>
            <person name="Yu C."/>
            <person name="Champe M."/>
            <person name="George R.A."/>
            <person name="Guarin H."/>
            <person name="Kronmiller B."/>
            <person name="Pacleb J.M."/>
            <person name="Park S."/>
            <person name="Wan K.H."/>
            <person name="Rubin G.M."/>
            <person name="Celniker S.E."/>
        </authorList>
    </citation>
    <scope>NUCLEOTIDE SEQUENCE [LARGE SCALE MRNA]</scope>
    <source>
        <strain>Berkeley</strain>
        <tissue>Head</tissue>
    </source>
</reference>
<reference key="5">
    <citation type="journal article" date="2003" name="Genome Biol.">
        <title>An integrated gene annotation and transcriptional profiling approach towards the full gene content of the Drosophila genome.</title>
        <authorList>
            <person name="Hild M."/>
            <person name="Beckmann B."/>
            <person name="Haas S.A."/>
            <person name="Koch B."/>
            <person name="Solovyev V."/>
            <person name="Busold C."/>
            <person name="Fellenberg K."/>
            <person name="Boutros M."/>
            <person name="Vingron M."/>
            <person name="Sauer F."/>
            <person name="Hoheisel J.D."/>
            <person name="Paro R."/>
        </authorList>
    </citation>
    <scope>IDENTIFICATION</scope>
</reference>
<accession>O46080</accession>
<name>SMG9_DROME</name>